<organism>
    <name type="scientific">Staphylococcus aureus (strain JH9)</name>
    <dbReference type="NCBI Taxonomy" id="359786"/>
    <lineage>
        <taxon>Bacteria</taxon>
        <taxon>Bacillati</taxon>
        <taxon>Bacillota</taxon>
        <taxon>Bacilli</taxon>
        <taxon>Bacillales</taxon>
        <taxon>Staphylococcaceae</taxon>
        <taxon>Staphylococcus</taxon>
    </lineage>
</organism>
<accession>A5IUN7</accession>
<proteinExistence type="inferred from homology"/>
<keyword id="KW-0460">Magnesium</keyword>
<keyword id="KW-0479">Metal-binding</keyword>
<keyword id="KW-0784">Thiamine biosynthesis</keyword>
<keyword id="KW-0808">Transferase</keyword>
<sequence>MFNQSYLNVYFICGTSDVPSHRTIHEVLEAALKAGITLFQFREKGESALKGNDKLVLAKELQHLCHQYDVPFIVNDDVSLAKEINADGIHVGQDDAKVKEIAQYFTDKIIGLSISDLDEYAKSDLTHVDYIGVGPIYPTPSKHDAHIPVGPEMIATFKEMNPQLPIVAIGGINTNNVAPIVEAGANGISVISAISKSENIEKTVNRFKDFFNN</sequence>
<dbReference type="EC" id="2.5.1.3" evidence="1"/>
<dbReference type="EMBL" id="CP000703">
    <property type="protein sequence ID" value="ABQ49910.1"/>
    <property type="molecule type" value="Genomic_DNA"/>
</dbReference>
<dbReference type="RefSeq" id="WP_000483153.1">
    <property type="nucleotide sequence ID" value="NC_009487.1"/>
</dbReference>
<dbReference type="SMR" id="A5IUN7"/>
<dbReference type="KEGG" id="saj:SaurJH9_2128"/>
<dbReference type="HOGENOM" id="CLU_018272_3_2_9"/>
<dbReference type="UniPathway" id="UPA00060">
    <property type="reaction ID" value="UER00141"/>
</dbReference>
<dbReference type="GO" id="GO:0005737">
    <property type="term" value="C:cytoplasm"/>
    <property type="evidence" value="ECO:0007669"/>
    <property type="project" value="TreeGrafter"/>
</dbReference>
<dbReference type="GO" id="GO:0000287">
    <property type="term" value="F:magnesium ion binding"/>
    <property type="evidence" value="ECO:0007669"/>
    <property type="project" value="UniProtKB-UniRule"/>
</dbReference>
<dbReference type="GO" id="GO:0004789">
    <property type="term" value="F:thiamine-phosphate diphosphorylase activity"/>
    <property type="evidence" value="ECO:0007669"/>
    <property type="project" value="UniProtKB-UniRule"/>
</dbReference>
<dbReference type="GO" id="GO:0009228">
    <property type="term" value="P:thiamine biosynthetic process"/>
    <property type="evidence" value="ECO:0007669"/>
    <property type="project" value="UniProtKB-KW"/>
</dbReference>
<dbReference type="GO" id="GO:0009229">
    <property type="term" value="P:thiamine diphosphate biosynthetic process"/>
    <property type="evidence" value="ECO:0007669"/>
    <property type="project" value="UniProtKB-UniRule"/>
</dbReference>
<dbReference type="CDD" id="cd00564">
    <property type="entry name" value="TMP_TenI"/>
    <property type="match status" value="1"/>
</dbReference>
<dbReference type="FunFam" id="3.20.20.70:FF:000096">
    <property type="entry name" value="Thiamine-phosphate synthase"/>
    <property type="match status" value="1"/>
</dbReference>
<dbReference type="Gene3D" id="3.20.20.70">
    <property type="entry name" value="Aldolase class I"/>
    <property type="match status" value="1"/>
</dbReference>
<dbReference type="HAMAP" id="MF_00097">
    <property type="entry name" value="TMP_synthase"/>
    <property type="match status" value="1"/>
</dbReference>
<dbReference type="InterPro" id="IPR013785">
    <property type="entry name" value="Aldolase_TIM"/>
</dbReference>
<dbReference type="InterPro" id="IPR036206">
    <property type="entry name" value="ThiamineP_synth_sf"/>
</dbReference>
<dbReference type="InterPro" id="IPR022998">
    <property type="entry name" value="ThiamineP_synth_TenI"/>
</dbReference>
<dbReference type="InterPro" id="IPR034291">
    <property type="entry name" value="TMP_synthase"/>
</dbReference>
<dbReference type="NCBIfam" id="TIGR00693">
    <property type="entry name" value="thiE"/>
    <property type="match status" value="1"/>
</dbReference>
<dbReference type="PANTHER" id="PTHR20857">
    <property type="entry name" value="THIAMINE-PHOSPHATE PYROPHOSPHORYLASE"/>
    <property type="match status" value="1"/>
</dbReference>
<dbReference type="PANTHER" id="PTHR20857:SF15">
    <property type="entry name" value="THIAMINE-PHOSPHATE SYNTHASE"/>
    <property type="match status" value="1"/>
</dbReference>
<dbReference type="Pfam" id="PF02581">
    <property type="entry name" value="TMP-TENI"/>
    <property type="match status" value="1"/>
</dbReference>
<dbReference type="SUPFAM" id="SSF51391">
    <property type="entry name" value="Thiamin phosphate synthase"/>
    <property type="match status" value="1"/>
</dbReference>
<protein>
    <recommendedName>
        <fullName evidence="1">Thiamine-phosphate synthase</fullName>
        <shortName evidence="1">TP synthase</shortName>
        <shortName evidence="1">TPS</shortName>
        <ecNumber evidence="1">2.5.1.3</ecNumber>
    </recommendedName>
    <alternativeName>
        <fullName evidence="1">Thiamine-phosphate pyrophosphorylase</fullName>
        <shortName evidence="1">TMP pyrophosphorylase</shortName>
        <shortName evidence="1">TMP-PPase</shortName>
    </alternativeName>
</protein>
<comment type="function">
    <text evidence="1">Condenses 4-methyl-5-(beta-hydroxyethyl)thiazole monophosphate (THZ-P) and 2-methyl-4-amino-5-hydroxymethyl pyrimidine pyrophosphate (HMP-PP) to form thiamine monophosphate (TMP).</text>
</comment>
<comment type="catalytic activity">
    <reaction evidence="1">
        <text>2-[(2R,5Z)-2-carboxy-4-methylthiazol-5(2H)-ylidene]ethyl phosphate + 4-amino-2-methyl-5-(diphosphooxymethyl)pyrimidine + 2 H(+) = thiamine phosphate + CO2 + diphosphate</text>
        <dbReference type="Rhea" id="RHEA:47844"/>
        <dbReference type="ChEBI" id="CHEBI:15378"/>
        <dbReference type="ChEBI" id="CHEBI:16526"/>
        <dbReference type="ChEBI" id="CHEBI:33019"/>
        <dbReference type="ChEBI" id="CHEBI:37575"/>
        <dbReference type="ChEBI" id="CHEBI:57841"/>
        <dbReference type="ChEBI" id="CHEBI:62899"/>
        <dbReference type="EC" id="2.5.1.3"/>
    </reaction>
</comment>
<comment type="catalytic activity">
    <reaction evidence="1">
        <text>2-(2-carboxy-4-methylthiazol-5-yl)ethyl phosphate + 4-amino-2-methyl-5-(diphosphooxymethyl)pyrimidine + 2 H(+) = thiamine phosphate + CO2 + diphosphate</text>
        <dbReference type="Rhea" id="RHEA:47848"/>
        <dbReference type="ChEBI" id="CHEBI:15378"/>
        <dbReference type="ChEBI" id="CHEBI:16526"/>
        <dbReference type="ChEBI" id="CHEBI:33019"/>
        <dbReference type="ChEBI" id="CHEBI:37575"/>
        <dbReference type="ChEBI" id="CHEBI:57841"/>
        <dbReference type="ChEBI" id="CHEBI:62890"/>
        <dbReference type="EC" id="2.5.1.3"/>
    </reaction>
</comment>
<comment type="catalytic activity">
    <reaction evidence="1">
        <text>4-methyl-5-(2-phosphooxyethyl)-thiazole + 4-amino-2-methyl-5-(diphosphooxymethyl)pyrimidine + H(+) = thiamine phosphate + diphosphate</text>
        <dbReference type="Rhea" id="RHEA:22328"/>
        <dbReference type="ChEBI" id="CHEBI:15378"/>
        <dbReference type="ChEBI" id="CHEBI:33019"/>
        <dbReference type="ChEBI" id="CHEBI:37575"/>
        <dbReference type="ChEBI" id="CHEBI:57841"/>
        <dbReference type="ChEBI" id="CHEBI:58296"/>
        <dbReference type="EC" id="2.5.1.3"/>
    </reaction>
</comment>
<comment type="cofactor">
    <cofactor evidence="1">
        <name>Mg(2+)</name>
        <dbReference type="ChEBI" id="CHEBI:18420"/>
    </cofactor>
    <text evidence="1">Binds 1 Mg(2+) ion per subunit.</text>
</comment>
<comment type="pathway">
    <text evidence="1">Cofactor biosynthesis; thiamine diphosphate biosynthesis; thiamine phosphate from 4-amino-2-methyl-5-diphosphomethylpyrimidine and 4-methyl-5-(2-phosphoethyl)-thiazole: step 1/1.</text>
</comment>
<comment type="similarity">
    <text evidence="1">Belongs to the thiamine-phosphate synthase family.</text>
</comment>
<gene>
    <name evidence="1" type="primary">thiE</name>
    <name type="ordered locus">SaurJH9_2128</name>
</gene>
<reference key="1">
    <citation type="submission" date="2007-05" db="EMBL/GenBank/DDBJ databases">
        <title>Complete sequence of chromosome of Staphylococcus aureus subsp. aureus JH9.</title>
        <authorList>
            <consortium name="US DOE Joint Genome Institute"/>
            <person name="Copeland A."/>
            <person name="Lucas S."/>
            <person name="Lapidus A."/>
            <person name="Barry K."/>
            <person name="Detter J.C."/>
            <person name="Glavina del Rio T."/>
            <person name="Hammon N."/>
            <person name="Israni S."/>
            <person name="Pitluck S."/>
            <person name="Chain P."/>
            <person name="Malfatti S."/>
            <person name="Shin M."/>
            <person name="Vergez L."/>
            <person name="Schmutz J."/>
            <person name="Larimer F."/>
            <person name="Land M."/>
            <person name="Hauser L."/>
            <person name="Kyrpides N."/>
            <person name="Kim E."/>
            <person name="Tomasz A."/>
            <person name="Richardson P."/>
        </authorList>
    </citation>
    <scope>NUCLEOTIDE SEQUENCE [LARGE SCALE GENOMIC DNA]</scope>
    <source>
        <strain>JH9</strain>
    </source>
</reference>
<name>THIE_STAA9</name>
<evidence type="ECO:0000255" key="1">
    <source>
        <dbReference type="HAMAP-Rule" id="MF_00097"/>
    </source>
</evidence>
<feature type="chain" id="PRO_1000075578" description="Thiamine-phosphate synthase">
    <location>
        <begin position="1"/>
        <end position="213"/>
    </location>
</feature>
<feature type="binding site" evidence="1">
    <location>
        <begin position="40"/>
        <end position="44"/>
    </location>
    <ligand>
        <name>4-amino-2-methyl-5-(diphosphooxymethyl)pyrimidine</name>
        <dbReference type="ChEBI" id="CHEBI:57841"/>
    </ligand>
</feature>
<feature type="binding site" evidence="1">
    <location>
        <position position="75"/>
    </location>
    <ligand>
        <name>4-amino-2-methyl-5-(diphosphooxymethyl)pyrimidine</name>
        <dbReference type="ChEBI" id="CHEBI:57841"/>
    </ligand>
</feature>
<feature type="binding site" evidence="1">
    <location>
        <position position="76"/>
    </location>
    <ligand>
        <name>Mg(2+)</name>
        <dbReference type="ChEBI" id="CHEBI:18420"/>
    </ligand>
</feature>
<feature type="binding site" evidence="1">
    <location>
        <position position="95"/>
    </location>
    <ligand>
        <name>Mg(2+)</name>
        <dbReference type="ChEBI" id="CHEBI:18420"/>
    </ligand>
</feature>
<feature type="binding site" evidence="1">
    <location>
        <position position="113"/>
    </location>
    <ligand>
        <name>4-amino-2-methyl-5-(diphosphooxymethyl)pyrimidine</name>
        <dbReference type="ChEBI" id="CHEBI:57841"/>
    </ligand>
</feature>
<feature type="binding site" evidence="1">
    <location>
        <begin position="139"/>
        <end position="141"/>
    </location>
    <ligand>
        <name>2-[(2R,5Z)-2-carboxy-4-methylthiazol-5(2H)-ylidene]ethyl phosphate</name>
        <dbReference type="ChEBI" id="CHEBI:62899"/>
    </ligand>
</feature>
<feature type="binding site" evidence="1">
    <location>
        <position position="142"/>
    </location>
    <ligand>
        <name>4-amino-2-methyl-5-(diphosphooxymethyl)pyrimidine</name>
        <dbReference type="ChEBI" id="CHEBI:57841"/>
    </ligand>
</feature>
<feature type="binding site" evidence="1">
    <location>
        <position position="171"/>
    </location>
    <ligand>
        <name>2-[(2R,5Z)-2-carboxy-4-methylthiazol-5(2H)-ylidene]ethyl phosphate</name>
        <dbReference type="ChEBI" id="CHEBI:62899"/>
    </ligand>
</feature>
<feature type="binding site" evidence="1">
    <location>
        <begin position="191"/>
        <end position="192"/>
    </location>
    <ligand>
        <name>2-[(2R,5Z)-2-carboxy-4-methylthiazol-5(2H)-ylidene]ethyl phosphate</name>
        <dbReference type="ChEBI" id="CHEBI:62899"/>
    </ligand>
</feature>